<dbReference type="EMBL" id="CH445325">
    <property type="protein sequence ID" value="EAT91809.2"/>
    <property type="molecule type" value="Genomic_DNA"/>
</dbReference>
<dbReference type="RefSeq" id="XP_001791004.1">
    <property type="nucleotide sequence ID" value="XM_001790952.1"/>
</dbReference>
<dbReference type="SMR" id="Q0V6Q0"/>
<dbReference type="FunCoup" id="Q0V6Q0">
    <property type="interactions" value="56"/>
</dbReference>
<dbReference type="STRING" id="321614.Q0V6Q0"/>
<dbReference type="GlyCosmos" id="Q0V6Q0">
    <property type="glycosylation" value="2 sites, No reported glycans"/>
</dbReference>
<dbReference type="EnsemblFungi" id="SNOT_00314">
    <property type="protein sequence ID" value="SNOT_00314"/>
    <property type="gene ID" value="SNOG_00314"/>
</dbReference>
<dbReference type="GeneID" id="5967798"/>
<dbReference type="KEGG" id="pno:SNOG_00314"/>
<dbReference type="VEuPathDB" id="FungiDB:JI435_003140"/>
<dbReference type="eggNOG" id="KOG0254">
    <property type="taxonomic scope" value="Eukaryota"/>
</dbReference>
<dbReference type="HOGENOM" id="CLU_000960_22_0_1"/>
<dbReference type="InParanoid" id="Q0V6Q0"/>
<dbReference type="Proteomes" id="UP000001055">
    <property type="component" value="Unassembled WGS sequence"/>
</dbReference>
<dbReference type="GO" id="GO:0005886">
    <property type="term" value="C:plasma membrane"/>
    <property type="evidence" value="ECO:0000318"/>
    <property type="project" value="GO_Central"/>
</dbReference>
<dbReference type="GO" id="GO:0022857">
    <property type="term" value="F:transmembrane transporter activity"/>
    <property type="evidence" value="ECO:0000318"/>
    <property type="project" value="GO_Central"/>
</dbReference>
<dbReference type="GO" id="GO:0055085">
    <property type="term" value="P:transmembrane transport"/>
    <property type="evidence" value="ECO:0000318"/>
    <property type="project" value="GO_Central"/>
</dbReference>
<dbReference type="FunFam" id="1.20.1250.20:FF:000484">
    <property type="entry name" value="MFS general substrate transporter"/>
    <property type="match status" value="1"/>
</dbReference>
<dbReference type="FunFam" id="1.20.1720.10:FF:000037">
    <property type="entry name" value="WGS project CABT00000000 data, contig 2.4"/>
    <property type="match status" value="1"/>
</dbReference>
<dbReference type="Gene3D" id="1.20.1250.20">
    <property type="entry name" value="MFS general substrate transporter like domains"/>
    <property type="match status" value="1"/>
</dbReference>
<dbReference type="Gene3D" id="1.20.1720.10">
    <property type="entry name" value="Multidrug resistance protein D"/>
    <property type="match status" value="1"/>
</dbReference>
<dbReference type="InterPro" id="IPR011701">
    <property type="entry name" value="MFS"/>
</dbReference>
<dbReference type="InterPro" id="IPR020846">
    <property type="entry name" value="MFS_dom"/>
</dbReference>
<dbReference type="InterPro" id="IPR036259">
    <property type="entry name" value="MFS_trans_sf"/>
</dbReference>
<dbReference type="PANTHER" id="PTHR23501">
    <property type="entry name" value="MAJOR FACILITATOR SUPERFAMILY"/>
    <property type="match status" value="1"/>
</dbReference>
<dbReference type="PANTHER" id="PTHR23501:SF187">
    <property type="entry name" value="MAJOR FACILITATOR SUPERFAMILY (MFS) PROFILE DOMAIN-CONTAINING PROTEIN"/>
    <property type="match status" value="1"/>
</dbReference>
<dbReference type="Pfam" id="PF07690">
    <property type="entry name" value="MFS_1"/>
    <property type="match status" value="1"/>
</dbReference>
<dbReference type="SUPFAM" id="SSF103473">
    <property type="entry name" value="MFS general substrate transporter"/>
    <property type="match status" value="1"/>
</dbReference>
<dbReference type="PROSITE" id="PS50850">
    <property type="entry name" value="MFS"/>
    <property type="match status" value="1"/>
</dbReference>
<proteinExistence type="inferred from homology"/>
<reference key="1">
    <citation type="journal article" date="2007" name="Plant Cell">
        <title>Dothideomycete-plant interactions illuminated by genome sequencing and EST analysis of the wheat pathogen Stagonospora nodorum.</title>
        <authorList>
            <person name="Hane J.K."/>
            <person name="Lowe R.G.T."/>
            <person name="Solomon P.S."/>
            <person name="Tan K.-C."/>
            <person name="Schoch C.L."/>
            <person name="Spatafora J.W."/>
            <person name="Crous P.W."/>
            <person name="Kodira C.D."/>
            <person name="Birren B.W."/>
            <person name="Galagan J.E."/>
            <person name="Torriani S.F.F."/>
            <person name="McDonald B.A."/>
            <person name="Oliver R.P."/>
        </authorList>
    </citation>
    <scope>NUCLEOTIDE SEQUENCE [LARGE SCALE GENOMIC DNA]</scope>
    <source>
        <strain>SN15 / ATCC MYA-4574 / FGSC 10173</strain>
    </source>
</reference>
<reference key="2">
    <citation type="journal article" date="2020" name="ACS Chem. Biol.">
        <title>Genomics-driven discovery of phytotoxic cytochalasans involved in the virulence of the wheat pathogen Parastagonospora nodorum.</title>
        <authorList>
            <person name="Li H."/>
            <person name="Wei H."/>
            <person name="Hu J."/>
            <person name="Lacey E."/>
            <person name="Sobolev A.N."/>
            <person name="Stubbs K.A."/>
            <person name="Solomon P.S."/>
            <person name="Chooi Y.H."/>
        </authorList>
    </citation>
    <scope>FUNCTION</scope>
    <scope>PATHWAY</scope>
</reference>
<feature type="chain" id="PRO_0000449447" description="MFS-type efflux transporter phmH">
    <location>
        <begin position="1"/>
        <end position="568"/>
    </location>
</feature>
<feature type="transmembrane region" description="Helical" evidence="1">
    <location>
        <begin position="45"/>
        <end position="65"/>
    </location>
</feature>
<feature type="transmembrane region" description="Helical" evidence="1">
    <location>
        <begin position="101"/>
        <end position="121"/>
    </location>
</feature>
<feature type="transmembrane region" description="Helical" evidence="1">
    <location>
        <begin position="134"/>
        <end position="154"/>
    </location>
</feature>
<feature type="transmembrane region" description="Helical" evidence="1">
    <location>
        <begin position="161"/>
        <end position="181"/>
    </location>
</feature>
<feature type="transmembrane region" description="Helical" evidence="1">
    <location>
        <begin position="199"/>
        <end position="219"/>
    </location>
</feature>
<feature type="transmembrane region" description="Helical" evidence="1">
    <location>
        <begin position="237"/>
        <end position="257"/>
    </location>
</feature>
<feature type="transmembrane region" description="Helical" evidence="1">
    <location>
        <begin position="268"/>
        <end position="288"/>
    </location>
</feature>
<feature type="transmembrane region" description="Helical" evidence="1">
    <location>
        <begin position="307"/>
        <end position="327"/>
    </location>
</feature>
<feature type="transmembrane region" description="Helical" evidence="1">
    <location>
        <begin position="344"/>
        <end position="364"/>
    </location>
</feature>
<feature type="transmembrane region" description="Helical" evidence="1">
    <location>
        <begin position="372"/>
        <end position="392"/>
    </location>
</feature>
<feature type="transmembrane region" description="Helical" evidence="1">
    <location>
        <begin position="399"/>
        <end position="419"/>
    </location>
</feature>
<feature type="transmembrane region" description="Helical" evidence="1">
    <location>
        <begin position="437"/>
        <end position="457"/>
    </location>
</feature>
<feature type="transmembrane region" description="Helical" evidence="1">
    <location>
        <begin position="515"/>
        <end position="535"/>
    </location>
</feature>
<feature type="region of interest" description="Disordered" evidence="3">
    <location>
        <begin position="1"/>
        <end position="39"/>
    </location>
</feature>
<feature type="compositionally biased region" description="Polar residues" evidence="3">
    <location>
        <begin position="1"/>
        <end position="11"/>
    </location>
</feature>
<feature type="glycosylation site" description="N-linked (GlcNAc...) asparagine" evidence="2">
    <location>
        <position position="303"/>
    </location>
</feature>
<feature type="glycosylation site" description="N-linked (GlcNAc...) asparagine" evidence="2">
    <location>
        <position position="563"/>
    </location>
</feature>
<sequence>MVSGTDTTEVGATTKAPPSEGTEGILDDHSSNSQPQAEKPAKTHYPLSFWLAFLGLCCTGLVSALDGSIVATALPSIIESLDGGDDYPLYGQLADLWGRRYVMIGATIIFILGSGLCGGSSSMNMLIWSRAVQGIGAGGINMLIDMIICDLVPMRERGNFIGLLFLFVSLGATIGPFVGGILTDRASWRWLWLLILLQIFYINLPFGGVALLLLILFLHVKWKNDLSTMERLRRVDVIGNSILIGATFAILYALTYGGTRYTWSDPHIAAPLTIGLVGLVAAFFWEMSPWCKYPVMPPLHFQNRTSAAAFFISFMCMLLAFWINFFYPVYFQAVLIASPTRAGVYTLPRAIAFPLFAAVGGAIVSKTGRYRTVHLVSTGIMPLVMGLSSILDQGSSKAEWVIWQLLFGVSGGMMISTTLQAVQAALPESEVATSVGTWSFVRSLGTIWGLSIPAAIFNNRFDQLSTQFDPSIRALFTRGQAYEHGTAKFIQSFDPETRQIVIQAYIEALKRVWQIGIVFGGVTFLSVFFEKEIHLRTELKTDFGLDEKKKGEVAKEENDVENNGTTVQ</sequence>
<evidence type="ECO:0000255" key="1"/>
<evidence type="ECO:0000255" key="2">
    <source>
        <dbReference type="PROSITE-ProRule" id="PRU00498"/>
    </source>
</evidence>
<evidence type="ECO:0000256" key="3">
    <source>
        <dbReference type="SAM" id="MobiDB-lite"/>
    </source>
</evidence>
<evidence type="ECO:0000269" key="4">
    <source>
    </source>
</evidence>
<evidence type="ECO:0000303" key="5">
    <source>
    </source>
</evidence>
<evidence type="ECO:0000305" key="6"/>
<evidence type="ECO:0000305" key="7">
    <source>
    </source>
</evidence>
<name>PHMH_PHANO</name>
<accession>Q0V6Q0</accession>
<gene>
    <name evidence="5" type="primary">phmH</name>
    <name type="ORF">SNOG_00314</name>
</gene>
<organism>
    <name type="scientific">Phaeosphaeria nodorum (strain SN15 / ATCC MYA-4574 / FGSC 10173)</name>
    <name type="common">Glume blotch fungus</name>
    <name type="synonym">Parastagonospora nodorum</name>
    <dbReference type="NCBI Taxonomy" id="321614"/>
    <lineage>
        <taxon>Eukaryota</taxon>
        <taxon>Fungi</taxon>
        <taxon>Dikarya</taxon>
        <taxon>Ascomycota</taxon>
        <taxon>Pezizomycotina</taxon>
        <taxon>Dothideomycetes</taxon>
        <taxon>Pleosporomycetidae</taxon>
        <taxon>Pleosporales</taxon>
        <taxon>Pleosporineae</taxon>
        <taxon>Phaeosphaeriaceae</taxon>
        <taxon>Parastagonospora</taxon>
    </lineage>
</organism>
<keyword id="KW-1003">Cell membrane</keyword>
<keyword id="KW-0325">Glycoprotein</keyword>
<keyword id="KW-0472">Membrane</keyword>
<keyword id="KW-0812">Transmembrane</keyword>
<keyword id="KW-1133">Transmembrane helix</keyword>
<keyword id="KW-0813">Transport</keyword>
<keyword id="KW-0843">Virulence</keyword>
<protein>
    <recommendedName>
        <fullName evidence="5">MFS-type efflux transporter phmH</fullName>
    </recommendedName>
    <alternativeName>
        <fullName evidence="5">Phomacin biosynthesis cluster protein H</fullName>
    </alternativeName>
</protein>
<comment type="function">
    <text evidence="4 7">MFS-type efflux transporter; part of the gene cluster that mediates the biosynthesis of thethe mycotoxins phomacins, leucine-derived cytochalasans with potent actin polymerization-inhibitory activities and monocot-specific antigerminative activities (PubMed:31815421). PhmH might be involved in the excretion of phomacins (Probable).</text>
</comment>
<comment type="subcellular location">
    <subcellularLocation>
        <location evidence="6">Cell membrane</location>
        <topology evidence="1">Multi-pass membrane protein</topology>
    </subcellularLocation>
</comment>
<comment type="similarity">
    <text evidence="6">Belongs to the major facilitator superfamily.</text>
</comment>